<sequence>MVEFAPLLVPWERRLQTFAVLQWVFSFLALAQLCIVIFVGLLFTRFWLFSVLYATWWYLDWDKPRQGGRPIQFFRRLAIWKYMKDYFPVSLVKTAELDPSRNYIAGFHPHGVLAAGAFLNLCTESTGFTSLFPGIRSYLMMLTVWFRAPFFRDYIMSGGLVSSEKVSADHILSRKGGGNLLAIIVGGAQEALDARPGAYRLLLKNRKGFIRLALMHGAALVPIFSFGENNLFNQVENTPGTWLRWIQNRLQKIMGISLPLFHGRGVFQYSFGLMPFRQPITTIVGKPIEVQMTPQPSREEVDRLHQRYIKELCKLFEEHKLKFNVPEDQHLEFC</sequence>
<comment type="function">
    <text evidence="3 4 5 6 9">Involved in glycerolipid synthesis and lipid metabolism (PubMed:12576479, PubMed:12621063, PubMed:12730219, PubMed:14966132). Plays a central role in absorption of dietary fat in the small intestine by catalyzing the resynthesis of triacylglycerol in enterocytes (Probable). Catalyzes the formation of diacylglycerol, the precursor of triacylglycerol, by transferring the acyl chain of a fatty acyl-CoA to a monoacylglycerol (PubMed:12621063, PubMed:12730219). Has a preference toward monoacylglycerols containing unsaturated fatty acids in an order of C18:3 &gt; C18:2 &gt; C18:1 &gt; C18:0 (PubMed:12730219). Able to use 1-monoalkylglycerol (1-MAkG, 1-O-alkylglycerol) as an acyl acceptor for the synthesis of monoalkyl-monoacylglycerol (MAMAG, 1-O-alkyl-3-acylglycerol) (PubMed:12730219). Possesses weak but significant activity with diacylglycerol as substrate, producing triacylglycerol (triacyl-sn-glycerol) (PubMed:12730219).</text>
</comment>
<comment type="catalytic activity">
    <reaction evidence="4 5">
        <text>a 2-acylglycerol + an acyl-CoA = a 1,2-diacylglycerol + CoA</text>
        <dbReference type="Rhea" id="RHEA:16741"/>
        <dbReference type="ChEBI" id="CHEBI:17389"/>
        <dbReference type="ChEBI" id="CHEBI:49172"/>
        <dbReference type="ChEBI" id="CHEBI:57287"/>
        <dbReference type="ChEBI" id="CHEBI:58342"/>
        <dbReference type="EC" id="2.3.1.22"/>
    </reaction>
    <physiologicalReaction direction="left-to-right" evidence="8 9">
        <dbReference type="Rhea" id="RHEA:16742"/>
    </physiologicalReaction>
</comment>
<comment type="catalytic activity">
    <reaction evidence="5">
        <text>2-(9Z-octadecenoyl)-glycerol + octanoyl-CoA = 1-octanoyl-2-(9Z-octadecenoyl)-glycerol + CoA</text>
        <dbReference type="Rhea" id="RHEA:77539"/>
        <dbReference type="ChEBI" id="CHEBI:57287"/>
        <dbReference type="ChEBI" id="CHEBI:57386"/>
        <dbReference type="ChEBI" id="CHEBI:73990"/>
        <dbReference type="ChEBI" id="CHEBI:197391"/>
    </reaction>
    <physiologicalReaction direction="left-to-right" evidence="9">
        <dbReference type="Rhea" id="RHEA:77540"/>
    </physiologicalReaction>
</comment>
<comment type="catalytic activity">
    <reaction evidence="5">
        <text>2-(9Z-octadecenoyl)-glycerol + dodecanoyl-CoA = 1-dodecanoyl-2-(9Z-octadecenoyl)-glycerol + CoA</text>
        <dbReference type="Rhea" id="RHEA:77275"/>
        <dbReference type="ChEBI" id="CHEBI:57287"/>
        <dbReference type="ChEBI" id="CHEBI:57375"/>
        <dbReference type="ChEBI" id="CHEBI:73990"/>
        <dbReference type="ChEBI" id="CHEBI:75579"/>
    </reaction>
    <physiologicalReaction direction="left-to-right" evidence="9">
        <dbReference type="Rhea" id="RHEA:77276"/>
    </physiologicalReaction>
</comment>
<comment type="catalytic activity">
    <reaction evidence="5">
        <text>2-(9Z-octadecenoyl)-glycerol + hexadecanoyl-CoA = 1-hexadecanoyl-2-(9Z-octadecenoyl)-glycerol + CoA</text>
        <dbReference type="Rhea" id="RHEA:77283"/>
        <dbReference type="ChEBI" id="CHEBI:57287"/>
        <dbReference type="ChEBI" id="CHEBI:57379"/>
        <dbReference type="ChEBI" id="CHEBI:73990"/>
        <dbReference type="ChEBI" id="CHEBI:75585"/>
    </reaction>
    <physiologicalReaction direction="left-to-right" evidence="9">
        <dbReference type="Rhea" id="RHEA:77284"/>
    </physiologicalReaction>
</comment>
<comment type="catalytic activity">
    <reaction evidence="5">
        <text>2-(9Z-octadecenoyl)-glycerol + octadecanoyl-CoA = 1-octadecanoyl-2-(9Z-octadecenoyl)-glycerol + CoA</text>
        <dbReference type="Rhea" id="RHEA:77287"/>
        <dbReference type="ChEBI" id="CHEBI:57287"/>
        <dbReference type="ChEBI" id="CHEBI:57394"/>
        <dbReference type="ChEBI" id="CHEBI:73990"/>
        <dbReference type="ChEBI" id="CHEBI:75590"/>
    </reaction>
    <physiologicalReaction direction="left-to-right" evidence="9">
        <dbReference type="Rhea" id="RHEA:77288"/>
    </physiologicalReaction>
</comment>
<comment type="catalytic activity">
    <reaction evidence="5">
        <text>2-(9Z-octadecenoyl)-glycerol + (9Z)-octadecenoyl-CoA = 1,2-di-(9Z-octadecenoyl)-glycerol + CoA</text>
        <dbReference type="Rhea" id="RHEA:39951"/>
        <dbReference type="ChEBI" id="CHEBI:52323"/>
        <dbReference type="ChEBI" id="CHEBI:57287"/>
        <dbReference type="ChEBI" id="CHEBI:57387"/>
        <dbReference type="ChEBI" id="CHEBI:73990"/>
    </reaction>
    <physiologicalReaction direction="left-to-right" evidence="9">
        <dbReference type="Rhea" id="RHEA:39952"/>
    </physiologicalReaction>
</comment>
<comment type="catalytic activity">
    <reaction evidence="5">
        <text>2-(9Z-octadecenoyl)-glycerol + (9Z,12Z)-octadecadienoyl-CoA = 1-(9Z,12Z-octadecadienoyl)-2-(9Z-octadecenoyl)-glycerol + CoA</text>
        <dbReference type="Rhea" id="RHEA:77291"/>
        <dbReference type="ChEBI" id="CHEBI:57287"/>
        <dbReference type="ChEBI" id="CHEBI:57383"/>
        <dbReference type="ChEBI" id="CHEBI:73990"/>
        <dbReference type="ChEBI" id="CHEBI:75614"/>
    </reaction>
    <physiologicalReaction direction="left-to-right" evidence="9">
        <dbReference type="Rhea" id="RHEA:77292"/>
    </physiologicalReaction>
</comment>
<comment type="catalytic activity">
    <reaction evidence="5">
        <text>eicosanoyl-CoA + 2-(9Z-octadecenoyl)-glycerol = 1-eicosanoyl-2-(9Z-octadecenoyl)-glycerol + CoA</text>
        <dbReference type="Rhea" id="RHEA:77543"/>
        <dbReference type="ChEBI" id="CHEBI:57287"/>
        <dbReference type="ChEBI" id="CHEBI:57380"/>
        <dbReference type="ChEBI" id="CHEBI:73990"/>
        <dbReference type="ChEBI" id="CHEBI:197392"/>
    </reaction>
    <physiologicalReaction direction="left-to-right" evidence="9">
        <dbReference type="Rhea" id="RHEA:77544"/>
    </physiologicalReaction>
</comment>
<comment type="catalytic activity">
    <reaction evidence="5">
        <text>2-(9Z-octadecenoyl)-glycerol + (5Z,8Z,11Z,14Z)-eicosatetraenoyl-CoA = 1-(5Z,8Z,11Z,14Z-eicosatetraenoyl)-2-(9Z-octadecenoyl)-glycerol + CoA</text>
        <dbReference type="Rhea" id="RHEA:77547"/>
        <dbReference type="ChEBI" id="CHEBI:57287"/>
        <dbReference type="ChEBI" id="CHEBI:57368"/>
        <dbReference type="ChEBI" id="CHEBI:73990"/>
        <dbReference type="ChEBI" id="CHEBI:75611"/>
    </reaction>
    <physiologicalReaction direction="left-to-right" evidence="9">
        <dbReference type="Rhea" id="RHEA:77548"/>
    </physiologicalReaction>
</comment>
<comment type="catalytic activity">
    <reaction evidence="8 9">
        <text>a 2-acylglycerol + an acyl-CoA = a 1,2-diacyl-sn-glycerol + CoA</text>
        <dbReference type="Rhea" id="RHEA:32947"/>
        <dbReference type="ChEBI" id="CHEBI:17389"/>
        <dbReference type="ChEBI" id="CHEBI:17815"/>
        <dbReference type="ChEBI" id="CHEBI:57287"/>
        <dbReference type="ChEBI" id="CHEBI:58342"/>
    </reaction>
    <physiologicalReaction direction="left-to-right" evidence="8 9">
        <dbReference type="Rhea" id="RHEA:32948"/>
    </physiologicalReaction>
</comment>
<comment type="catalytic activity">
    <reaction evidence="8 9">
        <text>a 2-acylglycerol + an acyl-CoA = a 2,3-diacyl-sn-glycerol + CoA</text>
        <dbReference type="Rhea" id="RHEA:38467"/>
        <dbReference type="ChEBI" id="CHEBI:17389"/>
        <dbReference type="ChEBI" id="CHEBI:57287"/>
        <dbReference type="ChEBI" id="CHEBI:58342"/>
        <dbReference type="ChEBI" id="CHEBI:75524"/>
    </reaction>
    <physiologicalReaction direction="left-to-right" evidence="8 9">
        <dbReference type="Rhea" id="RHEA:38468"/>
    </physiologicalReaction>
</comment>
<comment type="catalytic activity">
    <reaction evidence="4 5">
        <text>a 1-acylglycerol + an acyl-CoA = a 1,2-diacylglycerol + CoA</text>
        <dbReference type="Rhea" id="RHEA:39943"/>
        <dbReference type="ChEBI" id="CHEBI:35759"/>
        <dbReference type="ChEBI" id="CHEBI:49172"/>
        <dbReference type="ChEBI" id="CHEBI:57287"/>
        <dbReference type="ChEBI" id="CHEBI:58342"/>
    </reaction>
    <physiologicalReaction direction="left-to-right" evidence="8 9">
        <dbReference type="Rhea" id="RHEA:39944"/>
    </physiologicalReaction>
</comment>
<comment type="catalytic activity">
    <reaction evidence="5">
        <text>1-dodecanoylglycerol + (9Z)-octadecenoyl-CoA = 1-dodecanoyl-2-(9Z-octadecenoyl)-glycerol + CoA</text>
        <dbReference type="Rhea" id="RHEA:38115"/>
        <dbReference type="ChEBI" id="CHEBI:57287"/>
        <dbReference type="ChEBI" id="CHEBI:57387"/>
        <dbReference type="ChEBI" id="CHEBI:75539"/>
        <dbReference type="ChEBI" id="CHEBI:75579"/>
    </reaction>
    <physiologicalReaction direction="left-to-right" evidence="9">
        <dbReference type="Rhea" id="RHEA:38116"/>
    </physiologicalReaction>
</comment>
<comment type="catalytic activity">
    <reaction evidence="5">
        <text>1-tetradecanoylglycerol + (9Z)-octadecenoyl-CoA = 1-tetradecanoyl-2-(9Z-octadecenoyl)-glycerol + CoA</text>
        <dbReference type="Rhea" id="RHEA:38119"/>
        <dbReference type="ChEBI" id="CHEBI:57287"/>
        <dbReference type="ChEBI" id="CHEBI:57387"/>
        <dbReference type="ChEBI" id="CHEBI:75562"/>
        <dbReference type="ChEBI" id="CHEBI:75582"/>
    </reaction>
    <physiologicalReaction direction="left-to-right" evidence="9">
        <dbReference type="Rhea" id="RHEA:38120"/>
    </physiologicalReaction>
</comment>
<comment type="catalytic activity">
    <reaction evidence="5">
        <text>1-hexadecanoylglycerol + (9Z)-octadecenoyl-CoA = 1-hexadecanoyl-2-(9Z-octadecenoyl)-glycerol + CoA</text>
        <dbReference type="Rhea" id="RHEA:38123"/>
        <dbReference type="ChEBI" id="CHEBI:57287"/>
        <dbReference type="ChEBI" id="CHEBI:57387"/>
        <dbReference type="ChEBI" id="CHEBI:69081"/>
        <dbReference type="ChEBI" id="CHEBI:75585"/>
    </reaction>
    <physiologicalReaction direction="left-to-right" evidence="9">
        <dbReference type="Rhea" id="RHEA:38124"/>
    </physiologicalReaction>
</comment>
<comment type="catalytic activity">
    <reaction evidence="5">
        <text>1-(9Z-octadecenoyl)-glycerol + (9Z)-octadecenoyl-CoA = 1,2-di-(9Z-octadecenoyl)-glycerol + CoA</text>
        <dbReference type="Rhea" id="RHEA:37915"/>
        <dbReference type="ChEBI" id="CHEBI:52323"/>
        <dbReference type="ChEBI" id="CHEBI:57287"/>
        <dbReference type="ChEBI" id="CHEBI:57387"/>
        <dbReference type="ChEBI" id="CHEBI:75342"/>
    </reaction>
    <physiologicalReaction direction="left-to-right" evidence="9">
        <dbReference type="Rhea" id="RHEA:37916"/>
    </physiologicalReaction>
</comment>
<comment type="catalytic activity">
    <reaction evidence="5">
        <text>1-(9Z,12Z-octadecadienoyl)-glycerol + (9Z)-octadecenoyl-CoA = 1-(9Z,12Z-octadecadienoyl)-2-(9Z-octadecenoyl)-glycerol + CoA</text>
        <dbReference type="Rhea" id="RHEA:38131"/>
        <dbReference type="ChEBI" id="CHEBI:57287"/>
        <dbReference type="ChEBI" id="CHEBI:57387"/>
        <dbReference type="ChEBI" id="CHEBI:75568"/>
        <dbReference type="ChEBI" id="CHEBI:75614"/>
    </reaction>
    <physiologicalReaction direction="left-to-right" evidence="9">
        <dbReference type="Rhea" id="RHEA:38132"/>
    </physiologicalReaction>
</comment>
<comment type="catalytic activity">
    <reaction evidence="9">
        <text>1-(9Z,12Z,15Z-octadecatrienoyl)-glycerol + (9Z)-octadecenoyl-CoA = 1-(9Z,12Z,15Z-octadecatrienoyl)-2-(9Z-octadecenoyl)-glycerol + CoA</text>
        <dbReference type="Rhea" id="RHEA:38135"/>
        <dbReference type="ChEBI" id="CHEBI:57287"/>
        <dbReference type="ChEBI" id="CHEBI:57387"/>
        <dbReference type="ChEBI" id="CHEBI:75609"/>
        <dbReference type="ChEBI" id="CHEBI:75610"/>
    </reaction>
    <physiologicalReaction direction="left-to-right" evidence="9">
        <dbReference type="Rhea" id="RHEA:38136"/>
    </physiologicalReaction>
</comment>
<comment type="catalytic activity">
    <reaction evidence="4 5">
        <text>a 1-acylglycerol + an acyl-CoA = a 1,3-diacylglycerol + CoA</text>
        <dbReference type="Rhea" id="RHEA:77571"/>
        <dbReference type="ChEBI" id="CHEBI:35759"/>
        <dbReference type="ChEBI" id="CHEBI:47777"/>
        <dbReference type="ChEBI" id="CHEBI:57287"/>
        <dbReference type="ChEBI" id="CHEBI:58342"/>
    </reaction>
    <physiologicalReaction direction="left-to-right" evidence="8 9">
        <dbReference type="Rhea" id="RHEA:77572"/>
    </physiologicalReaction>
</comment>
<comment type="catalytic activity">
    <reaction evidence="5">
        <text>1-octanoylglycerol + (9Z)-octadecenoyl-CoA = 1-octanoyl-3-(9Z-octadecenoyl)-glycerol + CoA</text>
        <dbReference type="Rhea" id="RHEA:77579"/>
        <dbReference type="ChEBI" id="CHEBI:57287"/>
        <dbReference type="ChEBI" id="CHEBI:57387"/>
        <dbReference type="ChEBI" id="CHEBI:85241"/>
        <dbReference type="ChEBI" id="CHEBI:197405"/>
    </reaction>
    <physiologicalReaction direction="left-to-right" evidence="9">
        <dbReference type="Rhea" id="RHEA:77580"/>
    </physiologicalReaction>
</comment>
<comment type="catalytic activity">
    <reaction evidence="5">
        <text>1-dodecanoylglycerol + (9Z)-octadecenoyl-CoA = 1-dodecanoyl-3-(9Z-octadecenoyl)-glycerol + CoA</text>
        <dbReference type="Rhea" id="RHEA:77587"/>
        <dbReference type="ChEBI" id="CHEBI:57287"/>
        <dbReference type="ChEBI" id="CHEBI:57387"/>
        <dbReference type="ChEBI" id="CHEBI:75539"/>
        <dbReference type="ChEBI" id="CHEBI:197406"/>
    </reaction>
    <physiologicalReaction direction="left-to-right" evidence="9">
        <dbReference type="Rhea" id="RHEA:77588"/>
    </physiologicalReaction>
</comment>
<comment type="catalytic activity">
    <reaction evidence="5">
        <text>1-hexadecanoylglycerol + (9Z)-octadecenoyl-CoA = 1-(9Z-octadecenoyl)-3-hexadecanoylglycerol + CoA</text>
        <dbReference type="Rhea" id="RHEA:77563"/>
        <dbReference type="ChEBI" id="CHEBI:57287"/>
        <dbReference type="ChEBI" id="CHEBI:57387"/>
        <dbReference type="ChEBI" id="CHEBI:69081"/>
        <dbReference type="ChEBI" id="CHEBI:75869"/>
    </reaction>
    <physiologicalReaction direction="left-to-right" evidence="9">
        <dbReference type="Rhea" id="RHEA:77564"/>
    </physiologicalReaction>
</comment>
<comment type="catalytic activity">
    <reaction evidence="5">
        <text>1-octadecanoylglycerol + (9Z)-octadecenoyl-CoA = 1-octadecanoyl-3-(9Z-octadecenoyl)-glycerol + CoA</text>
        <dbReference type="Rhea" id="RHEA:77583"/>
        <dbReference type="ChEBI" id="CHEBI:57287"/>
        <dbReference type="ChEBI" id="CHEBI:57387"/>
        <dbReference type="ChEBI" id="CHEBI:75555"/>
        <dbReference type="ChEBI" id="CHEBI:197407"/>
    </reaction>
    <physiologicalReaction direction="left-to-right" evidence="9">
        <dbReference type="Rhea" id="RHEA:77584"/>
    </physiologicalReaction>
</comment>
<comment type="catalytic activity">
    <reaction evidence="5">
        <text>1-(9Z-octadecenoyl)-sn-glycerol + (9Z)-octadecenoyl-CoA = 1,3-di-(9Z-octadecenoyl)-glycerol + CoA</text>
        <dbReference type="Rhea" id="RHEA:77267"/>
        <dbReference type="ChEBI" id="CHEBI:57287"/>
        <dbReference type="ChEBI" id="CHEBI:57387"/>
        <dbReference type="ChEBI" id="CHEBI:75735"/>
        <dbReference type="ChEBI" id="CHEBI:75757"/>
    </reaction>
    <physiologicalReaction direction="left-to-right" evidence="9">
        <dbReference type="Rhea" id="RHEA:77268"/>
    </physiologicalReaction>
</comment>
<comment type="catalytic activity">
    <reaction evidence="5">
        <text>1-(9Z,12Z-octadecadienoyl)-glycerol + (9Z)-octadecenoyl-CoA = 1-(9Z-octadecenoyl)-3-(9Z,12Z-octadecadienoyl)-glycerol + CoA</text>
        <dbReference type="Rhea" id="RHEA:77591"/>
        <dbReference type="ChEBI" id="CHEBI:57287"/>
        <dbReference type="ChEBI" id="CHEBI:57387"/>
        <dbReference type="ChEBI" id="CHEBI:75568"/>
        <dbReference type="ChEBI" id="CHEBI:133484"/>
    </reaction>
    <physiologicalReaction direction="left-to-right" evidence="9">
        <dbReference type="Rhea" id="RHEA:77592"/>
    </physiologicalReaction>
</comment>
<comment type="catalytic activity">
    <reaction evidence="5">
        <text>1-(9Z,12Z,15Z-octadecatrienoyl)-glycerol + (9Z)-octadecenoyl-CoA = 1-(9Z,12Z,15Z-octadecatrienoyl)-3-(9Z-octadecenoyl)-glycerol + CoA</text>
        <dbReference type="Rhea" id="RHEA:77595"/>
        <dbReference type="ChEBI" id="CHEBI:57287"/>
        <dbReference type="ChEBI" id="CHEBI:57387"/>
        <dbReference type="ChEBI" id="CHEBI:75610"/>
        <dbReference type="ChEBI" id="CHEBI:197408"/>
    </reaction>
    <physiologicalReaction direction="left-to-right" evidence="9">
        <dbReference type="Rhea" id="RHEA:77596"/>
    </physiologicalReaction>
</comment>
<comment type="catalytic activity">
    <reaction evidence="5">
        <text>1-O-alkylglycerol + an acyl-CoA = 1-O-alkyl-3-acylglycerol + CoA</text>
        <dbReference type="Rhea" id="RHEA:77627"/>
        <dbReference type="ChEBI" id="CHEBI:57287"/>
        <dbReference type="ChEBI" id="CHEBI:58342"/>
        <dbReference type="ChEBI" id="CHEBI:76225"/>
        <dbReference type="ChEBI" id="CHEBI:77997"/>
    </reaction>
    <physiologicalReaction direction="left-to-right" evidence="9">
        <dbReference type="Rhea" id="RHEA:77628"/>
    </physiologicalReaction>
</comment>
<comment type="catalytic activity">
    <reaction evidence="5">
        <text>1-O-hexadecylglycerol + (9Z)-octadecenoyl-CoA = 1-O-hexadecyl-3-(9Z)-octadecenoylglycerol + CoA</text>
        <dbReference type="Rhea" id="RHEA:77575"/>
        <dbReference type="ChEBI" id="CHEBI:57287"/>
        <dbReference type="ChEBI" id="CHEBI:57387"/>
        <dbReference type="ChEBI" id="CHEBI:76061"/>
        <dbReference type="ChEBI" id="CHEBI:76062"/>
    </reaction>
    <physiologicalReaction direction="left-to-right" evidence="9">
        <dbReference type="Rhea" id="RHEA:77576"/>
    </physiologicalReaction>
</comment>
<comment type="catalytic activity">
    <reaction evidence="5">
        <text>an acyl-CoA + a 1,2-diacyl-sn-glycerol = a triacyl-sn-glycerol + CoA</text>
        <dbReference type="Rhea" id="RHEA:10868"/>
        <dbReference type="ChEBI" id="CHEBI:17815"/>
        <dbReference type="ChEBI" id="CHEBI:57287"/>
        <dbReference type="ChEBI" id="CHEBI:58342"/>
        <dbReference type="ChEBI" id="CHEBI:64615"/>
        <dbReference type="EC" id="2.3.1.20"/>
    </reaction>
    <physiologicalReaction direction="left-to-right" evidence="9">
        <dbReference type="Rhea" id="RHEA:10869"/>
    </physiologicalReaction>
</comment>
<comment type="catalytic activity">
    <reaction evidence="5">
        <text>1,2-di-(9Z-octadecenoyl)-sn-glycerol + (9Z)-octadecenoyl-CoA = 1,2,3-tri-(9Z-octadecenoyl)-glycerol + CoA</text>
        <dbReference type="Rhea" id="RHEA:38219"/>
        <dbReference type="ChEBI" id="CHEBI:52333"/>
        <dbReference type="ChEBI" id="CHEBI:53753"/>
        <dbReference type="ChEBI" id="CHEBI:57287"/>
        <dbReference type="ChEBI" id="CHEBI:57387"/>
    </reaction>
    <physiologicalReaction direction="left-to-right" evidence="9">
        <dbReference type="Rhea" id="RHEA:38220"/>
    </physiologicalReaction>
</comment>
<comment type="catalytic activity">
    <reaction evidence="1">
        <text>2-(9Z-octadecenoyl)-glycerol + butanoyl-CoA = 1-butanoyl-2-(9Z-octadecenoyl)-glycerol + CoA</text>
        <dbReference type="Rhea" id="RHEA:77271"/>
        <dbReference type="ChEBI" id="CHEBI:57287"/>
        <dbReference type="ChEBI" id="CHEBI:57371"/>
        <dbReference type="ChEBI" id="CHEBI:73990"/>
        <dbReference type="ChEBI" id="CHEBI:197386"/>
    </reaction>
    <physiologicalReaction direction="left-to-right" evidence="1">
        <dbReference type="Rhea" id="RHEA:77272"/>
    </physiologicalReaction>
</comment>
<comment type="catalytic activity">
    <reaction evidence="1">
        <text>2-(9Z-octadecenoyl)-glycerol + tetradecanoyl-CoA = 1-tetradecanoyl-2-(9Z-octadecenoyl)-glycerol + CoA</text>
        <dbReference type="Rhea" id="RHEA:77279"/>
        <dbReference type="ChEBI" id="CHEBI:57287"/>
        <dbReference type="ChEBI" id="CHEBI:57385"/>
        <dbReference type="ChEBI" id="CHEBI:73990"/>
        <dbReference type="ChEBI" id="CHEBI:75582"/>
    </reaction>
    <physiologicalReaction direction="left-to-right" evidence="1">
        <dbReference type="Rhea" id="RHEA:77280"/>
    </physiologicalReaction>
</comment>
<comment type="catalytic activity">
    <reaction evidence="1">
        <text>1-decanoylglycerol + (9Z)-octadecenoyl-CoA = 1-decanoyl-2-(9Z-octadecenoyl)-glycerol + CoA</text>
        <dbReference type="Rhea" id="RHEA:38019"/>
        <dbReference type="ChEBI" id="CHEBI:57287"/>
        <dbReference type="ChEBI" id="CHEBI:57387"/>
        <dbReference type="ChEBI" id="CHEBI:75547"/>
        <dbReference type="ChEBI" id="CHEBI:85787"/>
    </reaction>
    <physiologicalReaction direction="left-to-right" evidence="1">
        <dbReference type="Rhea" id="RHEA:38020"/>
    </physiologicalReaction>
</comment>
<comment type="catalytic activity">
    <reaction evidence="1">
        <text>1-octadecanoylglycerol + (9Z)-octadecenoyl-CoA = 1-octadecanoyl-2-(9Z-octadecenoyl)-glycerol + CoA</text>
        <dbReference type="Rhea" id="RHEA:38127"/>
        <dbReference type="ChEBI" id="CHEBI:57287"/>
        <dbReference type="ChEBI" id="CHEBI:57387"/>
        <dbReference type="ChEBI" id="CHEBI:75555"/>
        <dbReference type="ChEBI" id="CHEBI:75590"/>
    </reaction>
    <physiologicalReaction direction="left-to-right" evidence="1">
        <dbReference type="Rhea" id="RHEA:38128"/>
    </physiologicalReaction>
</comment>
<comment type="catalytic activity">
    <reaction evidence="1">
        <text>1-(5Z,8Z,11Z,14Z-eicosatetraenoyl)-glycerol + (9Z)-octadecenoyl-CoA = 1-(5Z,8Z,11Z,14Z-eicosatetraenoyl)-2-(9Z-octadecenoyl)-glycerol + CoA</text>
        <dbReference type="Rhea" id="RHEA:38139"/>
        <dbReference type="ChEBI" id="CHEBI:57287"/>
        <dbReference type="ChEBI" id="CHEBI:57387"/>
        <dbReference type="ChEBI" id="CHEBI:75611"/>
        <dbReference type="ChEBI" id="CHEBI:75612"/>
    </reaction>
    <physiologicalReaction direction="left-to-right" evidence="1">
        <dbReference type="Rhea" id="RHEA:38140"/>
    </physiologicalReaction>
</comment>
<comment type="catalytic activity">
    <reaction evidence="1">
        <text>1-decanoylglycerol + (9Z)-octadecenoyl-CoA = 1-decanoyl-3-(9Z-octadecenoyl)-glycerol + CoA</text>
        <dbReference type="Rhea" id="RHEA:77615"/>
        <dbReference type="ChEBI" id="CHEBI:57287"/>
        <dbReference type="ChEBI" id="CHEBI:57387"/>
        <dbReference type="ChEBI" id="CHEBI:75547"/>
        <dbReference type="ChEBI" id="CHEBI:197430"/>
    </reaction>
    <physiologicalReaction direction="left-to-right" evidence="1">
        <dbReference type="Rhea" id="RHEA:77616"/>
    </physiologicalReaction>
</comment>
<comment type="catalytic activity">
    <reaction evidence="1">
        <text>1-tetradecanoylglycerol + (9Z)-octadecenoyl-CoA = 1-tetradecanoyl-3-(9Z-octadecenoyl)-glycerol + CoA</text>
        <dbReference type="Rhea" id="RHEA:77631"/>
        <dbReference type="ChEBI" id="CHEBI:57287"/>
        <dbReference type="ChEBI" id="CHEBI:57387"/>
        <dbReference type="ChEBI" id="CHEBI:75562"/>
        <dbReference type="ChEBI" id="CHEBI:197427"/>
    </reaction>
    <physiologicalReaction direction="left-to-right" evidence="1">
        <dbReference type="Rhea" id="RHEA:77632"/>
    </physiologicalReaction>
</comment>
<comment type="catalytic activity">
    <reaction evidence="1">
        <text>1-(5Z,8Z,11Z,14Z-eicosatetraenoyl)-glycerol + (9Z)-octadecenoyl-CoA = 1-(5Z,8Z,11Z,14Z-eicosatetraenoyl)-3-(9Z-octadecenoyl)-glycerol + CoA</text>
        <dbReference type="Rhea" id="RHEA:77635"/>
        <dbReference type="ChEBI" id="CHEBI:57287"/>
        <dbReference type="ChEBI" id="CHEBI:57387"/>
        <dbReference type="ChEBI" id="CHEBI:75612"/>
        <dbReference type="ChEBI" id="CHEBI:197426"/>
    </reaction>
    <physiologicalReaction direction="left-to-right" evidence="1">
        <dbReference type="Rhea" id="RHEA:77636"/>
    </physiologicalReaction>
</comment>
<comment type="catalytic activity">
    <reaction evidence="1">
        <text>1-O-(9Z-octadecenyl)-glycerol + (9Z)-octadecenoyl-CoA = 1-O-(9Z-octadecyl)-3-(9Z-octadecenoyl)-glycerol + CoA</text>
        <dbReference type="Rhea" id="RHEA:55340"/>
        <dbReference type="ChEBI" id="CHEBI:34116"/>
        <dbReference type="ChEBI" id="CHEBI:57287"/>
        <dbReference type="ChEBI" id="CHEBI:57387"/>
        <dbReference type="ChEBI" id="CHEBI:197429"/>
    </reaction>
    <physiologicalReaction direction="left-to-right" evidence="1">
        <dbReference type="Rhea" id="RHEA:55341"/>
    </physiologicalReaction>
</comment>
<comment type="catalytic activity">
    <reaction evidence="1">
        <text>1-O-(9Z-octadecyl)-3-(9Z-octadecenoyl)-glycerol + (9Z)-octadecenoyl-CoA = 1-O-(9Z-octadecenyl)-2,3-di-(9Z-octadecenoyl)glycerol + CoA</text>
        <dbReference type="Rhea" id="RHEA:55344"/>
        <dbReference type="ChEBI" id="CHEBI:57287"/>
        <dbReference type="ChEBI" id="CHEBI:57387"/>
        <dbReference type="ChEBI" id="CHEBI:138735"/>
        <dbReference type="ChEBI" id="CHEBI:197429"/>
    </reaction>
    <physiologicalReaction direction="left-to-right" evidence="1">
        <dbReference type="Rhea" id="RHEA:55345"/>
    </physiologicalReaction>
</comment>
<comment type="activity regulation">
    <text evidence="5">Inhibited by oleic acid and sphingosine, while it is stimulated by phosphatidylcholine, phosphatidylserine and phosphatidic acid.</text>
</comment>
<comment type="biophysicochemical properties">
    <phDependence>
        <text evidence="5">Optimum pH is 7.0.</text>
    </phDependence>
</comment>
<comment type="pathway">
    <text>Glycerolipid metabolism; triacylglycerol biosynthesis.</text>
</comment>
<comment type="subcellular location">
    <subcellularLocation>
        <location evidence="6">Endoplasmic reticulum membrane</location>
        <topology evidence="6">Multi-pass membrane protein</topology>
    </subcellularLocation>
    <subcellularLocation>
        <location evidence="1">Cytoplasm</location>
        <location evidence="1">Perinuclear region</location>
    </subcellularLocation>
</comment>
<comment type="tissue specificity">
    <text evidence="3 4 6">Mainly expressed in small intestine. Detected in the small intestine in a proximal-to-distal gradient that correlated with fat absorption pattern. Present not only in the villi, but also in the crypt regions of the small intestine, which suggests that expression occurs prior to the maturation of enterocytes. Not detectable in other sections of the digestive tract, including stomach, cecum, colon and rectum, or other tissues such as kidney, liver and adipocytes (at protein level). Also detected in kidney, adipose and stomach. Expressed at very low level in liver, skeletal muscle and spleen. Not expressed in brain, heart, lung, skin, testis and thymus.</text>
</comment>
<comment type="induction">
    <text evidence="6">Up-regulated in mice fed a high fat diet, implicating a role in diet-induced obesity (at protein level).</text>
</comment>
<comment type="similarity">
    <text evidence="7">Belongs to the diacylglycerol acyltransferase family.</text>
</comment>
<protein>
    <recommendedName>
        <fullName evidence="7">2-acylglycerol O-acyltransferase 2</fullName>
        <ecNumber evidence="4 5">2.3.1.20</ecNumber>
        <ecNumber evidence="5">2.3.1.22</ecNumber>
    </recommendedName>
    <alternativeName>
        <fullName>Acyl-CoA:monoacylglycerol acyltransferase 2</fullName>
        <shortName>MGAT2</shortName>
    </alternativeName>
    <alternativeName>
        <fullName>Diacylglycerol acyltransferase 2-like protein 5</fullName>
    </alternativeName>
    <alternativeName>
        <fullName>Monoacylglycerol O-acyltransferase 1-like</fullName>
    </alternativeName>
    <alternativeName>
        <fullName>Monoacylglycerol O-acyltransferase 2</fullName>
    </alternativeName>
</protein>
<proteinExistence type="evidence at protein level"/>
<gene>
    <name evidence="10" type="primary">Mogat2</name>
    <name type="synonym">Dgat2l5</name>
    <name type="synonym">Mgat1l</name>
</gene>
<keyword id="KW-0012">Acyltransferase</keyword>
<keyword id="KW-0963">Cytoplasm</keyword>
<keyword id="KW-0256">Endoplasmic reticulum</keyword>
<keyword id="KW-0319">Glycerol metabolism</keyword>
<keyword id="KW-0444">Lipid biosynthesis</keyword>
<keyword id="KW-0443">Lipid metabolism</keyword>
<keyword id="KW-0472">Membrane</keyword>
<keyword id="KW-1185">Reference proteome</keyword>
<keyword id="KW-0808">Transferase</keyword>
<keyword id="KW-0812">Transmembrane</keyword>
<keyword id="KW-1133">Transmembrane helix</keyword>
<accession>Q80W94</accession>
<reference key="1">
    <citation type="journal article" date="2003" name="J. Biol. Chem.">
        <title>MGAT2, a monoacylglycerol acyltransferase expressed in the small intestine.</title>
        <authorList>
            <person name="Yen C.-L.E."/>
            <person name="Farese R.V. Jr."/>
        </authorList>
    </citation>
    <scope>NUCLEOTIDE SEQUENCE [MRNA]</scope>
    <scope>TISSUE SPECIFICITY</scope>
    <scope>CATALYTIC ACTIVITY</scope>
    <source>
        <strain>C57BL/6J</strain>
        <tissue>Intestine</tissue>
    </source>
</reference>
<reference key="2">
    <citation type="journal article" date="2005" name="Science">
        <title>The transcriptional landscape of the mammalian genome.</title>
        <authorList>
            <person name="Carninci P."/>
            <person name="Kasukawa T."/>
            <person name="Katayama S."/>
            <person name="Gough J."/>
            <person name="Frith M.C."/>
            <person name="Maeda N."/>
            <person name="Oyama R."/>
            <person name="Ravasi T."/>
            <person name="Lenhard B."/>
            <person name="Wells C."/>
            <person name="Kodzius R."/>
            <person name="Shimokawa K."/>
            <person name="Bajic V.B."/>
            <person name="Brenner S.E."/>
            <person name="Batalov S."/>
            <person name="Forrest A.R."/>
            <person name="Zavolan M."/>
            <person name="Davis M.J."/>
            <person name="Wilming L.G."/>
            <person name="Aidinis V."/>
            <person name="Allen J.E."/>
            <person name="Ambesi-Impiombato A."/>
            <person name="Apweiler R."/>
            <person name="Aturaliya R.N."/>
            <person name="Bailey T.L."/>
            <person name="Bansal M."/>
            <person name="Baxter L."/>
            <person name="Beisel K.W."/>
            <person name="Bersano T."/>
            <person name="Bono H."/>
            <person name="Chalk A.M."/>
            <person name="Chiu K.P."/>
            <person name="Choudhary V."/>
            <person name="Christoffels A."/>
            <person name="Clutterbuck D.R."/>
            <person name="Crowe M.L."/>
            <person name="Dalla E."/>
            <person name="Dalrymple B.P."/>
            <person name="de Bono B."/>
            <person name="Della Gatta G."/>
            <person name="di Bernardo D."/>
            <person name="Down T."/>
            <person name="Engstrom P."/>
            <person name="Fagiolini M."/>
            <person name="Faulkner G."/>
            <person name="Fletcher C.F."/>
            <person name="Fukushima T."/>
            <person name="Furuno M."/>
            <person name="Futaki S."/>
            <person name="Gariboldi M."/>
            <person name="Georgii-Hemming P."/>
            <person name="Gingeras T.R."/>
            <person name="Gojobori T."/>
            <person name="Green R.E."/>
            <person name="Gustincich S."/>
            <person name="Harbers M."/>
            <person name="Hayashi Y."/>
            <person name="Hensch T.K."/>
            <person name="Hirokawa N."/>
            <person name="Hill D."/>
            <person name="Huminiecki L."/>
            <person name="Iacono M."/>
            <person name="Ikeo K."/>
            <person name="Iwama A."/>
            <person name="Ishikawa T."/>
            <person name="Jakt M."/>
            <person name="Kanapin A."/>
            <person name="Katoh M."/>
            <person name="Kawasawa Y."/>
            <person name="Kelso J."/>
            <person name="Kitamura H."/>
            <person name="Kitano H."/>
            <person name="Kollias G."/>
            <person name="Krishnan S.P."/>
            <person name="Kruger A."/>
            <person name="Kummerfeld S.K."/>
            <person name="Kurochkin I.V."/>
            <person name="Lareau L.F."/>
            <person name="Lazarevic D."/>
            <person name="Lipovich L."/>
            <person name="Liu J."/>
            <person name="Liuni S."/>
            <person name="McWilliam S."/>
            <person name="Madan Babu M."/>
            <person name="Madera M."/>
            <person name="Marchionni L."/>
            <person name="Matsuda H."/>
            <person name="Matsuzawa S."/>
            <person name="Miki H."/>
            <person name="Mignone F."/>
            <person name="Miyake S."/>
            <person name="Morris K."/>
            <person name="Mottagui-Tabar S."/>
            <person name="Mulder N."/>
            <person name="Nakano N."/>
            <person name="Nakauchi H."/>
            <person name="Ng P."/>
            <person name="Nilsson R."/>
            <person name="Nishiguchi S."/>
            <person name="Nishikawa S."/>
            <person name="Nori F."/>
            <person name="Ohara O."/>
            <person name="Okazaki Y."/>
            <person name="Orlando V."/>
            <person name="Pang K.C."/>
            <person name="Pavan W.J."/>
            <person name="Pavesi G."/>
            <person name="Pesole G."/>
            <person name="Petrovsky N."/>
            <person name="Piazza S."/>
            <person name="Reed J."/>
            <person name="Reid J.F."/>
            <person name="Ring B.Z."/>
            <person name="Ringwald M."/>
            <person name="Rost B."/>
            <person name="Ruan Y."/>
            <person name="Salzberg S.L."/>
            <person name="Sandelin A."/>
            <person name="Schneider C."/>
            <person name="Schoenbach C."/>
            <person name="Sekiguchi K."/>
            <person name="Semple C.A."/>
            <person name="Seno S."/>
            <person name="Sessa L."/>
            <person name="Sheng Y."/>
            <person name="Shibata Y."/>
            <person name="Shimada H."/>
            <person name="Shimada K."/>
            <person name="Silva D."/>
            <person name="Sinclair B."/>
            <person name="Sperling S."/>
            <person name="Stupka E."/>
            <person name="Sugiura K."/>
            <person name="Sultana R."/>
            <person name="Takenaka Y."/>
            <person name="Taki K."/>
            <person name="Tammoja K."/>
            <person name="Tan S.L."/>
            <person name="Tang S."/>
            <person name="Taylor M.S."/>
            <person name="Tegner J."/>
            <person name="Teichmann S.A."/>
            <person name="Ueda H.R."/>
            <person name="van Nimwegen E."/>
            <person name="Verardo R."/>
            <person name="Wei C.L."/>
            <person name="Yagi K."/>
            <person name="Yamanishi H."/>
            <person name="Zabarovsky E."/>
            <person name="Zhu S."/>
            <person name="Zimmer A."/>
            <person name="Hide W."/>
            <person name="Bult C."/>
            <person name="Grimmond S.M."/>
            <person name="Teasdale R.D."/>
            <person name="Liu E.T."/>
            <person name="Brusic V."/>
            <person name="Quackenbush J."/>
            <person name="Wahlestedt C."/>
            <person name="Mattick J.S."/>
            <person name="Hume D.A."/>
            <person name="Kai C."/>
            <person name="Sasaki D."/>
            <person name="Tomaru Y."/>
            <person name="Fukuda S."/>
            <person name="Kanamori-Katayama M."/>
            <person name="Suzuki M."/>
            <person name="Aoki J."/>
            <person name="Arakawa T."/>
            <person name="Iida J."/>
            <person name="Imamura K."/>
            <person name="Itoh M."/>
            <person name="Kato T."/>
            <person name="Kawaji H."/>
            <person name="Kawagashira N."/>
            <person name="Kawashima T."/>
            <person name="Kojima M."/>
            <person name="Kondo S."/>
            <person name="Konno H."/>
            <person name="Nakano K."/>
            <person name="Ninomiya N."/>
            <person name="Nishio T."/>
            <person name="Okada M."/>
            <person name="Plessy C."/>
            <person name="Shibata K."/>
            <person name="Shiraki T."/>
            <person name="Suzuki S."/>
            <person name="Tagami M."/>
            <person name="Waki K."/>
            <person name="Watahiki A."/>
            <person name="Okamura-Oho Y."/>
            <person name="Suzuki H."/>
            <person name="Kawai J."/>
            <person name="Hayashizaki Y."/>
        </authorList>
    </citation>
    <scope>NUCLEOTIDE SEQUENCE [LARGE SCALE MRNA]</scope>
    <source>
        <strain>C57BL/6J</strain>
    </source>
</reference>
<reference key="3">
    <citation type="journal article" date="2004" name="Genome Res.">
        <title>The status, quality, and expansion of the NIH full-length cDNA project: the Mammalian Gene Collection (MGC).</title>
        <authorList>
            <consortium name="The MGC Project Team"/>
        </authorList>
    </citation>
    <scope>NUCLEOTIDE SEQUENCE [LARGE SCALE MRNA]</scope>
    <source>
        <strain>C57BL/6NCr</strain>
        <tissue>Hematopoietic stem cell</tissue>
    </source>
</reference>
<reference key="4">
    <citation type="journal article" date="2003" name="J. Biol. Chem.">
        <title>Cloning and functional characterization of a mouse intestinal acyl-CoA:monoacylglycerol acyltransferase, MGAT2.</title>
        <authorList>
            <person name="Cao J."/>
            <person name="Lockwood J."/>
            <person name="Burn P."/>
            <person name="Shi Y."/>
        </authorList>
    </citation>
    <scope>FUNCTION</scope>
    <scope>TISSUE SPECIFICITY</scope>
</reference>
<reference key="5">
    <citation type="journal article" date="2003" name="J. Biol. Chem.">
        <title>Properties of the mouse intestinal acyl-CoA:monoacylglycerol acyltransferase, MGAT2.</title>
        <authorList>
            <person name="Cao J."/>
            <person name="Burn P."/>
            <person name="Shi Y."/>
        </authorList>
    </citation>
    <scope>FUNCTION</scope>
    <scope>ACTIVITY REGULATION</scope>
    <scope>BIOPHYSICOCHEMICAL PROPERTIES</scope>
    <scope>CATALYTIC ACTIVITY</scope>
</reference>
<reference key="6">
    <citation type="journal article" date="2004" name="J. Biol. Chem.">
        <title>A predominant role of acyl-CoA:monoacylglycerol acyltransferase-2 in dietary fat absorption implicated by tissue distribution, subcellular localization, and up-regulation by high fat diet.</title>
        <authorList>
            <person name="Cao J."/>
            <person name="Hawkins E."/>
            <person name="Brozinick J."/>
            <person name="Liu X."/>
            <person name="Zhang H."/>
            <person name="Burn P."/>
            <person name="Shi Y."/>
        </authorList>
    </citation>
    <scope>FUNCTION</scope>
    <scope>SUBCELLULAR LOCATION</scope>
    <scope>TISSUE SPECIFICITY</scope>
    <scope>INDUCTION</scope>
</reference>
<organism>
    <name type="scientific">Mus musculus</name>
    <name type="common">Mouse</name>
    <dbReference type="NCBI Taxonomy" id="10090"/>
    <lineage>
        <taxon>Eukaryota</taxon>
        <taxon>Metazoa</taxon>
        <taxon>Chordata</taxon>
        <taxon>Craniata</taxon>
        <taxon>Vertebrata</taxon>
        <taxon>Euteleostomi</taxon>
        <taxon>Mammalia</taxon>
        <taxon>Eutheria</taxon>
        <taxon>Euarchontoglires</taxon>
        <taxon>Glires</taxon>
        <taxon>Rodentia</taxon>
        <taxon>Myomorpha</taxon>
        <taxon>Muroidea</taxon>
        <taxon>Muridae</taxon>
        <taxon>Murinae</taxon>
        <taxon>Mus</taxon>
        <taxon>Mus</taxon>
    </lineage>
</organism>
<dbReference type="EC" id="2.3.1.20" evidence="4 5"/>
<dbReference type="EC" id="2.3.1.22" evidence="5"/>
<dbReference type="EMBL" id="AY157609">
    <property type="protein sequence ID" value="AAO23673.1"/>
    <property type="molecule type" value="mRNA"/>
</dbReference>
<dbReference type="EMBL" id="AK133854">
    <property type="protein sequence ID" value="BAE21888.1"/>
    <property type="molecule type" value="mRNA"/>
</dbReference>
<dbReference type="EMBL" id="BC052831">
    <property type="protein sequence ID" value="AAH52831.1"/>
    <property type="molecule type" value="mRNA"/>
</dbReference>
<dbReference type="CCDS" id="CCDS21478.1"/>
<dbReference type="RefSeq" id="NP_803231.1">
    <property type="nucleotide sequence ID" value="NM_177448.4"/>
</dbReference>
<dbReference type="BioGRID" id="231424">
    <property type="interactions" value="2"/>
</dbReference>
<dbReference type="FunCoup" id="Q80W94">
    <property type="interactions" value="532"/>
</dbReference>
<dbReference type="STRING" id="10090.ENSMUSP00000064041"/>
<dbReference type="BindingDB" id="Q80W94"/>
<dbReference type="ChEMBL" id="CHEMBL3603729"/>
<dbReference type="GuidetoPHARMACOLOGY" id="2881"/>
<dbReference type="iPTMnet" id="Q80W94"/>
<dbReference type="PhosphoSitePlus" id="Q80W94"/>
<dbReference type="PaxDb" id="10090-ENSMUSP00000064041"/>
<dbReference type="PeptideAtlas" id="Q80W94"/>
<dbReference type="ProteomicsDB" id="295580"/>
<dbReference type="Antibodypedia" id="31177">
    <property type="antibodies" value="145 antibodies from 26 providers"/>
</dbReference>
<dbReference type="DNASU" id="233549"/>
<dbReference type="Ensembl" id="ENSMUST00000064231.8">
    <property type="protein sequence ID" value="ENSMUSP00000064041.8"/>
    <property type="gene ID" value="ENSMUSG00000052396.8"/>
</dbReference>
<dbReference type="GeneID" id="233549"/>
<dbReference type="KEGG" id="mmu:233549"/>
<dbReference type="UCSC" id="uc009ilf.2">
    <property type="organism name" value="mouse"/>
</dbReference>
<dbReference type="AGR" id="MGI:2663253"/>
<dbReference type="CTD" id="80168"/>
<dbReference type="MGI" id="MGI:2663253">
    <property type="gene designation" value="Mogat2"/>
</dbReference>
<dbReference type="VEuPathDB" id="HostDB:ENSMUSG00000052396"/>
<dbReference type="eggNOG" id="KOG0831">
    <property type="taxonomic scope" value="Eukaryota"/>
</dbReference>
<dbReference type="GeneTree" id="ENSGT01030000234582"/>
<dbReference type="HOGENOM" id="CLU_023995_0_1_1"/>
<dbReference type="InParanoid" id="Q80W94"/>
<dbReference type="OMA" id="FWFTCAN"/>
<dbReference type="OrthoDB" id="264532at2759"/>
<dbReference type="PhylomeDB" id="Q80W94"/>
<dbReference type="TreeFam" id="TF314707"/>
<dbReference type="BRENDA" id="2.3.1.22">
    <property type="organism ID" value="3474"/>
</dbReference>
<dbReference type="Reactome" id="R-MMU-75109">
    <property type="pathway name" value="Triglyceride biosynthesis"/>
</dbReference>
<dbReference type="UniPathway" id="UPA00282"/>
<dbReference type="BioGRID-ORCS" id="233549">
    <property type="hits" value="1 hit in 78 CRISPR screens"/>
</dbReference>
<dbReference type="PRO" id="PR:Q80W94"/>
<dbReference type="Proteomes" id="UP000000589">
    <property type="component" value="Chromosome 7"/>
</dbReference>
<dbReference type="RNAct" id="Q80W94">
    <property type="molecule type" value="protein"/>
</dbReference>
<dbReference type="Bgee" id="ENSMUSG00000052396">
    <property type="expression patterns" value="Expressed in epithelium of small intestine and 115 other cell types or tissues"/>
</dbReference>
<dbReference type="GO" id="GO:0005783">
    <property type="term" value="C:endoplasmic reticulum"/>
    <property type="evidence" value="ECO:0000266"/>
    <property type="project" value="MGI"/>
</dbReference>
<dbReference type="GO" id="GO:0005789">
    <property type="term" value="C:endoplasmic reticulum membrane"/>
    <property type="evidence" value="ECO:0000266"/>
    <property type="project" value="MGI"/>
</dbReference>
<dbReference type="GO" id="GO:1990578">
    <property type="term" value="C:perinuclear endoplasmic reticulum membrane"/>
    <property type="evidence" value="ECO:0000250"/>
    <property type="project" value="UniProtKB"/>
</dbReference>
<dbReference type="GO" id="GO:0003846">
    <property type="term" value="F:2-acylglycerol O-acyltransferase activity"/>
    <property type="evidence" value="ECO:0000314"/>
    <property type="project" value="MGI"/>
</dbReference>
<dbReference type="GO" id="GO:0016407">
    <property type="term" value="F:acetyltransferase activity"/>
    <property type="evidence" value="ECO:0000314"/>
    <property type="project" value="MGI"/>
</dbReference>
<dbReference type="GO" id="GO:0004144">
    <property type="term" value="F:diacylglycerol O-acyltransferase activity"/>
    <property type="evidence" value="ECO:0007669"/>
    <property type="project" value="RHEA"/>
</dbReference>
<dbReference type="GO" id="GO:0006651">
    <property type="term" value="P:diacylglycerol biosynthetic process"/>
    <property type="evidence" value="ECO:0000314"/>
    <property type="project" value="MGI"/>
</dbReference>
<dbReference type="GO" id="GO:0006071">
    <property type="term" value="P:glycerol metabolic process"/>
    <property type="evidence" value="ECO:0007669"/>
    <property type="project" value="UniProtKB-KW"/>
</dbReference>
<dbReference type="GO" id="GO:0050892">
    <property type="term" value="P:intestinal absorption"/>
    <property type="evidence" value="ECO:0000314"/>
    <property type="project" value="MGI"/>
</dbReference>
<dbReference type="GO" id="GO:0006629">
    <property type="term" value="P:lipid metabolic process"/>
    <property type="evidence" value="ECO:0000314"/>
    <property type="project" value="MGI"/>
</dbReference>
<dbReference type="GO" id="GO:0006640">
    <property type="term" value="P:monoacylglycerol biosynthetic process"/>
    <property type="evidence" value="ECO:0000250"/>
    <property type="project" value="UniProtKB"/>
</dbReference>
<dbReference type="GO" id="GO:0046462">
    <property type="term" value="P:monoacylglycerol metabolic process"/>
    <property type="evidence" value="ECO:0000266"/>
    <property type="project" value="MGI"/>
</dbReference>
<dbReference type="GO" id="GO:0019432">
    <property type="term" value="P:triglyceride biosynthetic process"/>
    <property type="evidence" value="ECO:0000314"/>
    <property type="project" value="MGI"/>
</dbReference>
<dbReference type="CDD" id="cd07987">
    <property type="entry name" value="LPLAT_MGAT-like"/>
    <property type="match status" value="1"/>
</dbReference>
<dbReference type="InterPro" id="IPR007130">
    <property type="entry name" value="DAGAT"/>
</dbReference>
<dbReference type="PANTHER" id="PTHR12317:SF74">
    <property type="entry name" value="2-ACYLGLYCEROL O-ACYLTRANSFERASE 2"/>
    <property type="match status" value="1"/>
</dbReference>
<dbReference type="PANTHER" id="PTHR12317">
    <property type="entry name" value="DIACYLGLYCEROL O-ACYLTRANSFERASE"/>
    <property type="match status" value="1"/>
</dbReference>
<dbReference type="Pfam" id="PF03982">
    <property type="entry name" value="DAGAT"/>
    <property type="match status" value="1"/>
</dbReference>
<feature type="chain" id="PRO_0000249063" description="2-acylglycerol O-acyltransferase 2">
    <location>
        <begin position="1"/>
        <end position="334"/>
    </location>
</feature>
<feature type="transmembrane region" description="Helical" evidence="2">
    <location>
        <begin position="23"/>
        <end position="43"/>
    </location>
</feature>
<feature type="transmembrane region" description="Helical" evidence="2">
    <location>
        <begin position="212"/>
        <end position="232"/>
    </location>
</feature>
<evidence type="ECO:0000250" key="1">
    <source>
        <dbReference type="UniProtKB" id="Q3SYC2"/>
    </source>
</evidence>
<evidence type="ECO:0000255" key="2"/>
<evidence type="ECO:0000269" key="3">
    <source>
    </source>
</evidence>
<evidence type="ECO:0000269" key="4">
    <source>
    </source>
</evidence>
<evidence type="ECO:0000269" key="5">
    <source>
    </source>
</evidence>
<evidence type="ECO:0000269" key="6">
    <source>
    </source>
</evidence>
<evidence type="ECO:0000305" key="7"/>
<evidence type="ECO:0000305" key="8">
    <source>
    </source>
</evidence>
<evidence type="ECO:0000305" key="9">
    <source>
    </source>
</evidence>
<evidence type="ECO:0000312" key="10">
    <source>
        <dbReference type="MGI" id="MGI:2663253"/>
    </source>
</evidence>
<name>MOGT2_MOUSE</name>